<feature type="chain" id="PRO_0000070457" description="Putative nucleoside permease NupX">
    <location>
        <begin position="1"/>
        <end position="416"/>
    </location>
</feature>
<feature type="topological domain" description="Periplasmic" evidence="3">
    <location>
        <begin position="1"/>
        <end position="2"/>
    </location>
</feature>
<feature type="transmembrane region" description="Helical" evidence="1">
    <location>
        <begin position="3"/>
        <end position="23"/>
    </location>
</feature>
<feature type="topological domain" description="Cytoplasmic" evidence="3">
    <location>
        <begin position="24"/>
        <end position="31"/>
    </location>
</feature>
<feature type="transmembrane region" description="Helical" evidence="1">
    <location>
        <begin position="32"/>
        <end position="52"/>
    </location>
</feature>
<feature type="topological domain" description="Periplasmic" evidence="3">
    <location>
        <begin position="53"/>
        <end position="95"/>
    </location>
</feature>
<feature type="transmembrane region" description="Helical" evidence="1">
    <location>
        <begin position="96"/>
        <end position="118"/>
    </location>
</feature>
<feature type="topological domain" description="Cytoplasmic" evidence="3">
    <location>
        <begin position="119"/>
        <end position="172"/>
    </location>
</feature>
<feature type="transmembrane region" description="Helical" evidence="1">
    <location>
        <begin position="173"/>
        <end position="193"/>
    </location>
</feature>
<feature type="topological domain" description="Periplasmic" evidence="3">
    <location>
        <begin position="194"/>
        <end position="196"/>
    </location>
</feature>
<feature type="transmembrane region" description="Helical" evidence="1">
    <location>
        <begin position="197"/>
        <end position="217"/>
    </location>
</feature>
<feature type="topological domain" description="Cytoplasmic" evidence="3">
    <location>
        <begin position="218"/>
        <end position="246"/>
    </location>
</feature>
<feature type="transmembrane region" description="Helical" evidence="1">
    <location>
        <begin position="247"/>
        <end position="267"/>
    </location>
</feature>
<feature type="topological domain" description="Periplasmic" evidence="3">
    <location>
        <begin position="268"/>
        <end position="352"/>
    </location>
</feature>
<feature type="transmembrane region" description="Helical" evidence="1">
    <location>
        <begin position="353"/>
        <end position="373"/>
    </location>
</feature>
<feature type="topological domain" description="Cytoplasmic" evidence="3">
    <location>
        <begin position="374"/>
        <end position="394"/>
    </location>
</feature>
<feature type="transmembrane region" description="Helical" evidence="1">
    <location>
        <begin position="395"/>
        <end position="415"/>
    </location>
</feature>
<feature type="topological domain" description="Periplasmic" evidence="2">
    <location>
        <position position="416"/>
    </location>
</feature>
<name>NUPX_ECOLI</name>
<gene>
    <name type="primary">nupX</name>
    <name type="synonym">yeiJ</name>
    <name type="ordered locus">b2161</name>
    <name type="ordered locus">JW2148</name>
</gene>
<sequence length="416" mass="43410">MDVMRSVLGMVVLLTIAFLLSVNKKKISLRTVGAALVLQVVIGGIMLWLPPGRWVAEKVAFGVHKVMAYSDAGSAFIFGSLVGPKMDTLFDGAGFIFGFRVLPAIIFVTALVSILYYIGVMGILIRILGGIFQKALNISKIESFVAVTTIFLGQNEIPAIVKPFIDRLNRNELFTAICSGMASIAGSTMIGYAALGVPVEYLLAASLMAIPGGILFARLLSPATESSQVSFNNLSFTETPPKSIIEAAATGAMTGLKIAAGVATVVMAFVAIIALINGIIGGVGGWFGFEHASLESILGYLLAPLAWVMGVDWSDANLAGSLIGQKLAINEFVAYLNFSPYLQTAGTLDAKTVAIISFALCGFANFGSIGVVVGAFSAVAPHRAPEIAQLGLRALAAATLSNLMSATIAGFFIGLA</sequence>
<evidence type="ECO:0000255" key="1"/>
<evidence type="ECO:0000269" key="2">
    <source>
    </source>
</evidence>
<evidence type="ECO:0000305" key="3"/>
<dbReference type="EMBL" id="U00007">
    <property type="protein sequence ID" value="AAA60513.1"/>
    <property type="molecule type" value="Genomic_DNA"/>
</dbReference>
<dbReference type="EMBL" id="U00096">
    <property type="protein sequence ID" value="AAC75222.1"/>
    <property type="molecule type" value="Genomic_DNA"/>
</dbReference>
<dbReference type="EMBL" id="AP009048">
    <property type="protein sequence ID" value="BAE76638.1"/>
    <property type="molecule type" value="Genomic_DNA"/>
</dbReference>
<dbReference type="PIR" id="H64984">
    <property type="entry name" value="H64984"/>
</dbReference>
<dbReference type="RefSeq" id="NP_416666.1">
    <property type="nucleotide sequence ID" value="NC_000913.3"/>
</dbReference>
<dbReference type="RefSeq" id="WP_000382966.1">
    <property type="nucleotide sequence ID" value="NZ_LN832404.1"/>
</dbReference>
<dbReference type="SMR" id="P33021"/>
<dbReference type="BioGRID" id="4260459">
    <property type="interactions" value="7"/>
</dbReference>
<dbReference type="DIP" id="DIP-11922N"/>
<dbReference type="FunCoup" id="P33021">
    <property type="interactions" value="476"/>
</dbReference>
<dbReference type="IntAct" id="P33021">
    <property type="interactions" value="1"/>
</dbReference>
<dbReference type="TCDB" id="2.A.41.2.10">
    <property type="family name" value="the concentrative nucleoside transporter (cnt) family"/>
</dbReference>
<dbReference type="PaxDb" id="511145-b2161"/>
<dbReference type="EnsemblBacteria" id="AAC75222">
    <property type="protein sequence ID" value="AAC75222"/>
    <property type="gene ID" value="b2161"/>
</dbReference>
<dbReference type="GeneID" id="946655"/>
<dbReference type="KEGG" id="ecj:JW2148"/>
<dbReference type="KEGG" id="eco:b2161"/>
<dbReference type="KEGG" id="ecoc:C3026_12110"/>
<dbReference type="PATRIC" id="fig|1411691.4.peg.78"/>
<dbReference type="EchoBASE" id="EB1964"/>
<dbReference type="eggNOG" id="COG1972">
    <property type="taxonomic scope" value="Bacteria"/>
</dbReference>
<dbReference type="HOGENOM" id="CLU_016813_4_2_6"/>
<dbReference type="InParanoid" id="P33021"/>
<dbReference type="OMA" id="DKMYELF"/>
<dbReference type="OrthoDB" id="9766455at2"/>
<dbReference type="PhylomeDB" id="P33021"/>
<dbReference type="BioCyc" id="EcoCyc:YEIJ-MONOMER"/>
<dbReference type="BioCyc" id="MetaCyc:YEIJ-MONOMER"/>
<dbReference type="PRO" id="PR:P33021"/>
<dbReference type="Proteomes" id="UP000000625">
    <property type="component" value="Chromosome"/>
</dbReference>
<dbReference type="GO" id="GO:0005886">
    <property type="term" value="C:plasma membrane"/>
    <property type="evidence" value="ECO:0000314"/>
    <property type="project" value="EcoCyc"/>
</dbReference>
<dbReference type="GO" id="GO:0005337">
    <property type="term" value="F:nucleoside transmembrane transporter activity"/>
    <property type="evidence" value="ECO:0000318"/>
    <property type="project" value="GO_Central"/>
</dbReference>
<dbReference type="GO" id="GO:0015293">
    <property type="term" value="F:symporter activity"/>
    <property type="evidence" value="ECO:0000318"/>
    <property type="project" value="GO_Central"/>
</dbReference>
<dbReference type="GO" id="GO:1901642">
    <property type="term" value="P:nucleoside transmembrane transport"/>
    <property type="evidence" value="ECO:0000318"/>
    <property type="project" value="GO_Central"/>
</dbReference>
<dbReference type="InterPro" id="IPR008276">
    <property type="entry name" value="C_nuclsd_transpt"/>
</dbReference>
<dbReference type="InterPro" id="IPR018270">
    <property type="entry name" value="C_nuclsd_transpt_met_bac"/>
</dbReference>
<dbReference type="InterPro" id="IPR011657">
    <property type="entry name" value="CNT_C_dom"/>
</dbReference>
<dbReference type="InterPro" id="IPR002668">
    <property type="entry name" value="CNT_N_dom"/>
</dbReference>
<dbReference type="InterPro" id="IPR011642">
    <property type="entry name" value="Gate_dom"/>
</dbReference>
<dbReference type="NCBIfam" id="TIGR00804">
    <property type="entry name" value="nupC"/>
    <property type="match status" value="1"/>
</dbReference>
<dbReference type="PANTHER" id="PTHR10590">
    <property type="entry name" value="SODIUM/NUCLEOSIDE COTRANSPORTER"/>
    <property type="match status" value="1"/>
</dbReference>
<dbReference type="PANTHER" id="PTHR10590:SF4">
    <property type="entry name" value="SOLUTE CARRIER FAMILY 28 MEMBER 3"/>
    <property type="match status" value="1"/>
</dbReference>
<dbReference type="Pfam" id="PF07670">
    <property type="entry name" value="Gate"/>
    <property type="match status" value="1"/>
</dbReference>
<dbReference type="Pfam" id="PF07662">
    <property type="entry name" value="Nucleos_tra2_C"/>
    <property type="match status" value="1"/>
</dbReference>
<dbReference type="Pfam" id="PF01773">
    <property type="entry name" value="Nucleos_tra2_N"/>
    <property type="match status" value="1"/>
</dbReference>
<accession>P33021</accession>
<accession>Q2MAR8</accession>
<proteinExistence type="evidence at protein level"/>
<organism>
    <name type="scientific">Escherichia coli (strain K12)</name>
    <dbReference type="NCBI Taxonomy" id="83333"/>
    <lineage>
        <taxon>Bacteria</taxon>
        <taxon>Pseudomonadati</taxon>
        <taxon>Pseudomonadota</taxon>
        <taxon>Gammaproteobacteria</taxon>
        <taxon>Enterobacterales</taxon>
        <taxon>Enterobacteriaceae</taxon>
        <taxon>Escherichia</taxon>
    </lineage>
</organism>
<comment type="subcellular location">
    <subcellularLocation>
        <location evidence="2">Cell inner membrane</location>
        <topology evidence="1">Multi-pass membrane protein</topology>
    </subcellularLocation>
</comment>
<comment type="similarity">
    <text evidence="3">Belongs to the concentrative nucleoside transporter (CNT) (TC 2.A.41) family.</text>
</comment>
<reference key="1">
    <citation type="submission" date="1993-10" db="EMBL/GenBank/DDBJ databases">
        <title>Automated multiplex sequencing of the E.coli genome.</title>
        <authorList>
            <person name="Richterich P."/>
            <person name="Lakey N."/>
            <person name="Gryan G."/>
            <person name="Jaehn L."/>
            <person name="Mintz L."/>
            <person name="Robison K."/>
            <person name="Church G.M."/>
        </authorList>
    </citation>
    <scope>NUCLEOTIDE SEQUENCE [LARGE SCALE GENOMIC DNA]</scope>
    <source>
        <strain>K12 / BHB2600</strain>
    </source>
</reference>
<reference key="2">
    <citation type="journal article" date="1997" name="Science">
        <title>The complete genome sequence of Escherichia coli K-12.</title>
        <authorList>
            <person name="Blattner F.R."/>
            <person name="Plunkett G. III"/>
            <person name="Bloch C.A."/>
            <person name="Perna N.T."/>
            <person name="Burland V."/>
            <person name="Riley M."/>
            <person name="Collado-Vides J."/>
            <person name="Glasner J.D."/>
            <person name="Rode C.K."/>
            <person name="Mayhew G.F."/>
            <person name="Gregor J."/>
            <person name="Davis N.W."/>
            <person name="Kirkpatrick H.A."/>
            <person name="Goeden M.A."/>
            <person name="Rose D.J."/>
            <person name="Mau B."/>
            <person name="Shao Y."/>
        </authorList>
    </citation>
    <scope>NUCLEOTIDE SEQUENCE [LARGE SCALE GENOMIC DNA]</scope>
    <source>
        <strain>K12 / MG1655 / ATCC 47076</strain>
    </source>
</reference>
<reference key="3">
    <citation type="journal article" date="2006" name="Mol. Syst. Biol.">
        <title>Highly accurate genome sequences of Escherichia coli K-12 strains MG1655 and W3110.</title>
        <authorList>
            <person name="Hayashi K."/>
            <person name="Morooka N."/>
            <person name="Yamamoto Y."/>
            <person name="Fujita K."/>
            <person name="Isono K."/>
            <person name="Choi S."/>
            <person name="Ohtsubo E."/>
            <person name="Baba T."/>
            <person name="Wanner B.L."/>
            <person name="Mori H."/>
            <person name="Horiuchi T."/>
        </authorList>
    </citation>
    <scope>NUCLEOTIDE SEQUENCE [LARGE SCALE GENOMIC DNA]</scope>
    <source>
        <strain>K12 / W3110 / ATCC 27325 / DSM 5911</strain>
    </source>
</reference>
<reference key="4">
    <citation type="journal article" date="2005" name="Science">
        <title>Global topology analysis of the Escherichia coli inner membrane proteome.</title>
        <authorList>
            <person name="Daley D.O."/>
            <person name="Rapp M."/>
            <person name="Granseth E."/>
            <person name="Melen K."/>
            <person name="Drew D."/>
            <person name="von Heijne G."/>
        </authorList>
    </citation>
    <scope>SUBCELLULAR LOCATION</scope>
    <scope>TOPOLOGY [LARGE SCALE ANALYSIS]</scope>
    <source>
        <strain>K12 / MG1655 / ATCC 47076</strain>
    </source>
</reference>
<protein>
    <recommendedName>
        <fullName evidence="3">Putative nucleoside permease NupX</fullName>
    </recommendedName>
</protein>
<keyword id="KW-0997">Cell inner membrane</keyword>
<keyword id="KW-1003">Cell membrane</keyword>
<keyword id="KW-0472">Membrane</keyword>
<keyword id="KW-1185">Reference proteome</keyword>
<keyword id="KW-0812">Transmembrane</keyword>
<keyword id="KW-1133">Transmembrane helix</keyword>
<keyword id="KW-0813">Transport</keyword>